<protein>
    <recommendedName>
        <fullName evidence="1">Prefoldin subunit alpha</fullName>
    </recommendedName>
    <alternativeName>
        <fullName evidence="1">GimC subunit alpha</fullName>
    </alternativeName>
</protein>
<sequence>MAQSRERLAEEYSVLAQVAEELQREIQLAQTLIAEVDSAILALKNISSLEDGKEILVPVSAGVYVRASIKRQEKFLVAIGSNILVEKSLDEAVEFLNKRKEELSQLVERRMNDLNKVVARIREIESSIR</sequence>
<organism>
    <name type="scientific">Thermofilum pendens (strain DSM 2475 / Hrk 5)</name>
    <dbReference type="NCBI Taxonomy" id="368408"/>
    <lineage>
        <taxon>Archaea</taxon>
        <taxon>Thermoproteota</taxon>
        <taxon>Thermoprotei</taxon>
        <taxon>Thermofilales</taxon>
        <taxon>Thermofilaceae</taxon>
        <taxon>Thermofilum</taxon>
    </lineage>
</organism>
<comment type="function">
    <text evidence="1">Molecular chaperone capable of stabilizing a range of proteins. Seems to fulfill an ATP-independent, HSP70-like function in archaeal de novo protein folding.</text>
</comment>
<comment type="subunit">
    <text evidence="1">Heterohexamer of two alpha and four beta subunits.</text>
</comment>
<comment type="subcellular location">
    <subcellularLocation>
        <location evidence="1">Cytoplasm</location>
    </subcellularLocation>
</comment>
<comment type="similarity">
    <text evidence="1">Belongs to the prefoldin alpha subunit family.</text>
</comment>
<feature type="chain" id="PRO_0000322256" description="Prefoldin subunit alpha">
    <location>
        <begin position="1"/>
        <end position="129"/>
    </location>
</feature>
<dbReference type="EMBL" id="CP000505">
    <property type="protein sequence ID" value="ABL77839.1"/>
    <property type="molecule type" value="Genomic_DNA"/>
</dbReference>
<dbReference type="SMR" id="A1RXA9"/>
<dbReference type="STRING" id="368408.Tpen_0430"/>
<dbReference type="EnsemblBacteria" id="ABL77839">
    <property type="protein sequence ID" value="ABL77839"/>
    <property type="gene ID" value="Tpen_0430"/>
</dbReference>
<dbReference type="KEGG" id="tpe:Tpen_0430"/>
<dbReference type="eggNOG" id="arCOG01341">
    <property type="taxonomic scope" value="Archaea"/>
</dbReference>
<dbReference type="HOGENOM" id="CLU_091867_1_1_2"/>
<dbReference type="OrthoDB" id="31082at2157"/>
<dbReference type="Proteomes" id="UP000000641">
    <property type="component" value="Chromosome"/>
</dbReference>
<dbReference type="GO" id="GO:0005737">
    <property type="term" value="C:cytoplasm"/>
    <property type="evidence" value="ECO:0007669"/>
    <property type="project" value="UniProtKB-SubCell"/>
</dbReference>
<dbReference type="GO" id="GO:0016272">
    <property type="term" value="C:prefoldin complex"/>
    <property type="evidence" value="ECO:0007669"/>
    <property type="project" value="UniProtKB-UniRule"/>
</dbReference>
<dbReference type="GO" id="GO:0051082">
    <property type="term" value="F:unfolded protein binding"/>
    <property type="evidence" value="ECO:0007669"/>
    <property type="project" value="UniProtKB-UniRule"/>
</dbReference>
<dbReference type="GO" id="GO:0006457">
    <property type="term" value="P:protein folding"/>
    <property type="evidence" value="ECO:0007669"/>
    <property type="project" value="UniProtKB-UniRule"/>
</dbReference>
<dbReference type="CDD" id="cd23160">
    <property type="entry name" value="Prefoldin_alpha_GimC"/>
    <property type="match status" value="1"/>
</dbReference>
<dbReference type="Gene3D" id="1.10.287.370">
    <property type="match status" value="1"/>
</dbReference>
<dbReference type="HAMAP" id="MF_00308">
    <property type="entry name" value="PfdA"/>
    <property type="match status" value="1"/>
</dbReference>
<dbReference type="InterPro" id="IPR011599">
    <property type="entry name" value="PFD_alpha_archaea"/>
</dbReference>
<dbReference type="InterPro" id="IPR009053">
    <property type="entry name" value="Prefoldin"/>
</dbReference>
<dbReference type="InterPro" id="IPR004127">
    <property type="entry name" value="Prefoldin_subunit_alpha"/>
</dbReference>
<dbReference type="NCBIfam" id="TIGR00293">
    <property type="entry name" value="prefoldin subunit alpha"/>
    <property type="match status" value="1"/>
</dbReference>
<dbReference type="PANTHER" id="PTHR12674">
    <property type="entry name" value="PREFOLDIN SUBUNIT 5"/>
    <property type="match status" value="1"/>
</dbReference>
<dbReference type="PANTHER" id="PTHR12674:SF2">
    <property type="entry name" value="PREFOLDIN SUBUNIT 5"/>
    <property type="match status" value="1"/>
</dbReference>
<dbReference type="Pfam" id="PF02996">
    <property type="entry name" value="Prefoldin"/>
    <property type="match status" value="1"/>
</dbReference>
<dbReference type="SUPFAM" id="SSF46579">
    <property type="entry name" value="Prefoldin"/>
    <property type="match status" value="1"/>
</dbReference>
<name>PFDA_THEPD</name>
<keyword id="KW-0143">Chaperone</keyword>
<keyword id="KW-0963">Cytoplasm</keyword>
<keyword id="KW-1185">Reference proteome</keyword>
<evidence type="ECO:0000255" key="1">
    <source>
        <dbReference type="HAMAP-Rule" id="MF_00308"/>
    </source>
</evidence>
<accession>A1RXA9</accession>
<gene>
    <name evidence="1" type="primary">pfdA</name>
    <name type="ordered locus">Tpen_0430</name>
</gene>
<proteinExistence type="inferred from homology"/>
<reference key="1">
    <citation type="journal article" date="2008" name="J. Bacteriol.">
        <title>Genome sequence of Thermofilum pendens reveals an exceptional loss of biosynthetic pathways without genome reduction.</title>
        <authorList>
            <person name="Anderson I."/>
            <person name="Rodriguez J."/>
            <person name="Susanti D."/>
            <person name="Porat I."/>
            <person name="Reich C."/>
            <person name="Ulrich L.E."/>
            <person name="Elkins J.G."/>
            <person name="Mavromatis K."/>
            <person name="Lykidis A."/>
            <person name="Kim E."/>
            <person name="Thompson L.S."/>
            <person name="Nolan M."/>
            <person name="Land M."/>
            <person name="Copeland A."/>
            <person name="Lapidus A."/>
            <person name="Lucas S."/>
            <person name="Detter C."/>
            <person name="Zhulin I.B."/>
            <person name="Olsen G.J."/>
            <person name="Whitman W."/>
            <person name="Mukhopadhyay B."/>
            <person name="Bristow J."/>
            <person name="Kyrpides N."/>
        </authorList>
    </citation>
    <scope>NUCLEOTIDE SEQUENCE [LARGE SCALE GENOMIC DNA]</scope>
    <source>
        <strain>DSM 2475 / Hrk 5</strain>
    </source>
</reference>